<organism>
    <name type="scientific">Streptomyces griseus subsp. griseus (strain JCM 4626 / CBS 651.72 / NBRC 13350 / KCC S-0626 / ISP 5235)</name>
    <dbReference type="NCBI Taxonomy" id="455632"/>
    <lineage>
        <taxon>Bacteria</taxon>
        <taxon>Bacillati</taxon>
        <taxon>Actinomycetota</taxon>
        <taxon>Actinomycetes</taxon>
        <taxon>Kitasatosporales</taxon>
        <taxon>Streptomycetaceae</taxon>
        <taxon>Streptomyces</taxon>
    </lineage>
</organism>
<feature type="chain" id="PRO_1000135980" description="2,3-bisphosphoglycerate-dependent phosphoglycerate mutase">
    <location>
        <begin position="1"/>
        <end position="253"/>
    </location>
</feature>
<feature type="active site" description="Tele-phosphohistidine intermediate" evidence="1">
    <location>
        <position position="13"/>
    </location>
</feature>
<feature type="active site" description="Proton donor/acceptor" evidence="1">
    <location>
        <position position="91"/>
    </location>
</feature>
<feature type="binding site" evidence="1">
    <location>
        <begin position="12"/>
        <end position="19"/>
    </location>
    <ligand>
        <name>substrate</name>
    </ligand>
</feature>
<feature type="binding site" evidence="1">
    <location>
        <begin position="25"/>
        <end position="26"/>
    </location>
    <ligand>
        <name>substrate</name>
    </ligand>
</feature>
<feature type="binding site" evidence="1">
    <location>
        <position position="64"/>
    </location>
    <ligand>
        <name>substrate</name>
    </ligand>
</feature>
<feature type="binding site" evidence="1">
    <location>
        <begin position="91"/>
        <end position="94"/>
    </location>
    <ligand>
        <name>substrate</name>
    </ligand>
</feature>
<feature type="binding site" evidence="1">
    <location>
        <position position="102"/>
    </location>
    <ligand>
        <name>substrate</name>
    </ligand>
</feature>
<feature type="binding site" evidence="1">
    <location>
        <begin position="118"/>
        <end position="119"/>
    </location>
    <ligand>
        <name>substrate</name>
    </ligand>
</feature>
<feature type="binding site" evidence="1">
    <location>
        <begin position="187"/>
        <end position="188"/>
    </location>
    <ligand>
        <name>substrate</name>
    </ligand>
</feature>
<feature type="site" description="Transition state stabilizer" evidence="1">
    <location>
        <position position="186"/>
    </location>
</feature>
<protein>
    <recommendedName>
        <fullName evidence="1">2,3-bisphosphoglycerate-dependent phosphoglycerate mutase</fullName>
        <shortName evidence="1">BPG-dependent PGAM</shortName>
        <shortName evidence="1">PGAM</shortName>
        <shortName evidence="1">Phosphoglyceromutase</shortName>
        <shortName evidence="1">dPGM</shortName>
        <ecNumber evidence="1">5.4.2.11</ecNumber>
    </recommendedName>
</protein>
<proteinExistence type="inferred from homology"/>
<comment type="function">
    <text evidence="1">Catalyzes the interconversion of 2-phosphoglycerate and 3-phosphoglycerate.</text>
</comment>
<comment type="catalytic activity">
    <reaction evidence="1">
        <text>(2R)-2-phosphoglycerate = (2R)-3-phosphoglycerate</text>
        <dbReference type="Rhea" id="RHEA:15901"/>
        <dbReference type="ChEBI" id="CHEBI:58272"/>
        <dbReference type="ChEBI" id="CHEBI:58289"/>
        <dbReference type="EC" id="5.4.2.11"/>
    </reaction>
</comment>
<comment type="pathway">
    <text evidence="1">Carbohydrate degradation; glycolysis; pyruvate from D-glyceraldehyde 3-phosphate: step 3/5.</text>
</comment>
<comment type="similarity">
    <text evidence="1">Belongs to the phosphoglycerate mutase family. BPG-dependent PGAM subfamily.</text>
</comment>
<name>GPMA_STRGG</name>
<dbReference type="EC" id="5.4.2.11" evidence="1"/>
<dbReference type="EMBL" id="AP009493">
    <property type="protein sequence ID" value="BAG20834.1"/>
    <property type="molecule type" value="Genomic_DNA"/>
</dbReference>
<dbReference type="RefSeq" id="WP_003968178.1">
    <property type="nucleotide sequence ID" value="NC_010572.1"/>
</dbReference>
<dbReference type="SMR" id="B1VS80"/>
<dbReference type="KEGG" id="sgr:SGR_4005"/>
<dbReference type="eggNOG" id="COG0588">
    <property type="taxonomic scope" value="Bacteria"/>
</dbReference>
<dbReference type="HOGENOM" id="CLU_033323_1_1_11"/>
<dbReference type="UniPathway" id="UPA00109">
    <property type="reaction ID" value="UER00186"/>
</dbReference>
<dbReference type="Proteomes" id="UP000001685">
    <property type="component" value="Chromosome"/>
</dbReference>
<dbReference type="GO" id="GO:0004619">
    <property type="term" value="F:phosphoglycerate mutase activity"/>
    <property type="evidence" value="ECO:0007669"/>
    <property type="project" value="UniProtKB-EC"/>
</dbReference>
<dbReference type="GO" id="GO:0006094">
    <property type="term" value="P:gluconeogenesis"/>
    <property type="evidence" value="ECO:0007669"/>
    <property type="project" value="UniProtKB-UniRule"/>
</dbReference>
<dbReference type="GO" id="GO:0006096">
    <property type="term" value="P:glycolytic process"/>
    <property type="evidence" value="ECO:0007669"/>
    <property type="project" value="UniProtKB-UniRule"/>
</dbReference>
<dbReference type="CDD" id="cd07067">
    <property type="entry name" value="HP_PGM_like"/>
    <property type="match status" value="1"/>
</dbReference>
<dbReference type="FunFam" id="3.40.50.1240:FF:000012">
    <property type="entry name" value="Phosphoglycerate mutase 1"/>
    <property type="match status" value="1"/>
</dbReference>
<dbReference type="Gene3D" id="3.40.50.1240">
    <property type="entry name" value="Phosphoglycerate mutase-like"/>
    <property type="match status" value="1"/>
</dbReference>
<dbReference type="HAMAP" id="MF_01039">
    <property type="entry name" value="PGAM_GpmA"/>
    <property type="match status" value="1"/>
</dbReference>
<dbReference type="InterPro" id="IPR013078">
    <property type="entry name" value="His_Pase_superF_clade-1"/>
</dbReference>
<dbReference type="InterPro" id="IPR029033">
    <property type="entry name" value="His_PPase_superfam"/>
</dbReference>
<dbReference type="InterPro" id="IPR001345">
    <property type="entry name" value="PG/BPGM_mutase_AS"/>
</dbReference>
<dbReference type="InterPro" id="IPR005952">
    <property type="entry name" value="Phosphogly_mut1"/>
</dbReference>
<dbReference type="NCBIfam" id="TIGR01258">
    <property type="entry name" value="pgm_1"/>
    <property type="match status" value="1"/>
</dbReference>
<dbReference type="NCBIfam" id="NF010713">
    <property type="entry name" value="PRK14115.1"/>
    <property type="match status" value="1"/>
</dbReference>
<dbReference type="NCBIfam" id="NF010718">
    <property type="entry name" value="PRK14120.1"/>
    <property type="match status" value="1"/>
</dbReference>
<dbReference type="PANTHER" id="PTHR11931">
    <property type="entry name" value="PHOSPHOGLYCERATE MUTASE"/>
    <property type="match status" value="1"/>
</dbReference>
<dbReference type="Pfam" id="PF00300">
    <property type="entry name" value="His_Phos_1"/>
    <property type="match status" value="1"/>
</dbReference>
<dbReference type="PIRSF" id="PIRSF000709">
    <property type="entry name" value="6PFK_2-Ptase"/>
    <property type="match status" value="1"/>
</dbReference>
<dbReference type="SMART" id="SM00855">
    <property type="entry name" value="PGAM"/>
    <property type="match status" value="1"/>
</dbReference>
<dbReference type="SUPFAM" id="SSF53254">
    <property type="entry name" value="Phosphoglycerate mutase-like"/>
    <property type="match status" value="1"/>
</dbReference>
<dbReference type="PROSITE" id="PS00175">
    <property type="entry name" value="PG_MUTASE"/>
    <property type="match status" value="1"/>
</dbReference>
<gene>
    <name evidence="1" type="primary">gpmA</name>
    <name type="ordered locus">SGR_4005</name>
</gene>
<sequence>MADAPYKLILLRHGESEWNAKNLFTGWVDVNLTEKGEKEAVRGGELLKDAGLLPDVLHTSLQRRAIRTAQLALESADRLWIPVRRSWRLNERHYGALQGKDKAQTLAEFGEEQFMLWRRSYDTPPPPLARDDEFSQFDDPRYATLPPEVRPDTECLKDVVVRMLPYWFDSIVPDLLTGRTVLVAAHGNSLRGLVKHLDGISDEDISGLNIPTGIPLSYELDADFKPLKPGGTYLDPDAAKAAIEAVKNQGKKK</sequence>
<evidence type="ECO:0000255" key="1">
    <source>
        <dbReference type="HAMAP-Rule" id="MF_01039"/>
    </source>
</evidence>
<accession>B1VS80</accession>
<reference key="1">
    <citation type="journal article" date="2008" name="J. Bacteriol.">
        <title>Genome sequence of the streptomycin-producing microorganism Streptomyces griseus IFO 13350.</title>
        <authorList>
            <person name="Ohnishi Y."/>
            <person name="Ishikawa J."/>
            <person name="Hara H."/>
            <person name="Suzuki H."/>
            <person name="Ikenoya M."/>
            <person name="Ikeda H."/>
            <person name="Yamashita A."/>
            <person name="Hattori M."/>
            <person name="Horinouchi S."/>
        </authorList>
    </citation>
    <scope>NUCLEOTIDE SEQUENCE [LARGE SCALE GENOMIC DNA]</scope>
    <source>
        <strain>JCM 4626 / CBS 651.72 / NBRC 13350 / KCC S-0626 / ISP 5235</strain>
    </source>
</reference>
<keyword id="KW-0312">Gluconeogenesis</keyword>
<keyword id="KW-0324">Glycolysis</keyword>
<keyword id="KW-0413">Isomerase</keyword>